<name>ILVC_CAMJR</name>
<protein>
    <recommendedName>
        <fullName evidence="1">Ketol-acid reductoisomerase (NADP(+))</fullName>
        <shortName evidence="1">KARI</shortName>
        <ecNumber evidence="1">1.1.1.86</ecNumber>
    </recommendedName>
    <alternativeName>
        <fullName evidence="1">Acetohydroxy-acid isomeroreductase</fullName>
        <shortName evidence="1">AHIR</shortName>
    </alternativeName>
    <alternativeName>
        <fullName evidence="1">Alpha-keto-beta-hydroxylacyl reductoisomerase</fullName>
    </alternativeName>
    <alternativeName>
        <fullName evidence="1">Ketol-acid reductoisomerase type 1</fullName>
    </alternativeName>
    <alternativeName>
        <fullName evidence="1">Ketol-acid reductoisomerase type I</fullName>
    </alternativeName>
</protein>
<dbReference type="EC" id="1.1.1.86" evidence="1"/>
<dbReference type="EMBL" id="CP000025">
    <property type="protein sequence ID" value="AAW34528.1"/>
    <property type="molecule type" value="Genomic_DNA"/>
</dbReference>
<dbReference type="RefSeq" id="WP_002852218.1">
    <property type="nucleotide sequence ID" value="NC_003912.7"/>
</dbReference>
<dbReference type="PDB" id="7RDU">
    <property type="method" value="X-ray"/>
    <property type="resolution" value="2.50 A"/>
    <property type="chains" value="A=2-330"/>
</dbReference>
<dbReference type="PDB" id="8SWM">
    <property type="method" value="X-ray"/>
    <property type="resolution" value="3.00 A"/>
    <property type="chains" value="A=1-330"/>
</dbReference>
<dbReference type="PDBsum" id="7RDU"/>
<dbReference type="PDBsum" id="8SWM"/>
<dbReference type="SMR" id="Q5HVD9"/>
<dbReference type="KEGG" id="cjr:CJE0735"/>
<dbReference type="HOGENOM" id="CLU_033821_0_1_7"/>
<dbReference type="UniPathway" id="UPA00047">
    <property type="reaction ID" value="UER00056"/>
</dbReference>
<dbReference type="UniPathway" id="UPA00049">
    <property type="reaction ID" value="UER00060"/>
</dbReference>
<dbReference type="GO" id="GO:0005829">
    <property type="term" value="C:cytosol"/>
    <property type="evidence" value="ECO:0007669"/>
    <property type="project" value="TreeGrafter"/>
</dbReference>
<dbReference type="GO" id="GO:0004455">
    <property type="term" value="F:ketol-acid reductoisomerase activity"/>
    <property type="evidence" value="ECO:0007669"/>
    <property type="project" value="UniProtKB-UniRule"/>
</dbReference>
<dbReference type="GO" id="GO:0000287">
    <property type="term" value="F:magnesium ion binding"/>
    <property type="evidence" value="ECO:0007669"/>
    <property type="project" value="UniProtKB-UniRule"/>
</dbReference>
<dbReference type="GO" id="GO:0050661">
    <property type="term" value="F:NADP binding"/>
    <property type="evidence" value="ECO:0007669"/>
    <property type="project" value="InterPro"/>
</dbReference>
<dbReference type="GO" id="GO:0009097">
    <property type="term" value="P:isoleucine biosynthetic process"/>
    <property type="evidence" value="ECO:0007669"/>
    <property type="project" value="UniProtKB-UniRule"/>
</dbReference>
<dbReference type="GO" id="GO:0009099">
    <property type="term" value="P:L-valine biosynthetic process"/>
    <property type="evidence" value="ECO:0007669"/>
    <property type="project" value="UniProtKB-UniRule"/>
</dbReference>
<dbReference type="FunFam" id="3.40.50.720:FF:000023">
    <property type="entry name" value="Ketol-acid reductoisomerase (NADP(+))"/>
    <property type="match status" value="1"/>
</dbReference>
<dbReference type="Gene3D" id="6.10.240.10">
    <property type="match status" value="1"/>
</dbReference>
<dbReference type="Gene3D" id="3.40.50.720">
    <property type="entry name" value="NAD(P)-binding Rossmann-like Domain"/>
    <property type="match status" value="1"/>
</dbReference>
<dbReference type="HAMAP" id="MF_00435">
    <property type="entry name" value="IlvC"/>
    <property type="match status" value="1"/>
</dbReference>
<dbReference type="InterPro" id="IPR008927">
    <property type="entry name" value="6-PGluconate_DH-like_C_sf"/>
</dbReference>
<dbReference type="InterPro" id="IPR013023">
    <property type="entry name" value="KARI"/>
</dbReference>
<dbReference type="InterPro" id="IPR000506">
    <property type="entry name" value="KARI_C"/>
</dbReference>
<dbReference type="InterPro" id="IPR013116">
    <property type="entry name" value="KARI_N"/>
</dbReference>
<dbReference type="InterPro" id="IPR014359">
    <property type="entry name" value="KARI_prok"/>
</dbReference>
<dbReference type="InterPro" id="IPR036291">
    <property type="entry name" value="NAD(P)-bd_dom_sf"/>
</dbReference>
<dbReference type="NCBIfam" id="TIGR00465">
    <property type="entry name" value="ilvC"/>
    <property type="match status" value="1"/>
</dbReference>
<dbReference type="NCBIfam" id="NF004017">
    <property type="entry name" value="PRK05479.1"/>
    <property type="match status" value="1"/>
</dbReference>
<dbReference type="NCBIfam" id="NF009940">
    <property type="entry name" value="PRK13403.1"/>
    <property type="match status" value="1"/>
</dbReference>
<dbReference type="PANTHER" id="PTHR21371">
    <property type="entry name" value="KETOL-ACID REDUCTOISOMERASE, MITOCHONDRIAL"/>
    <property type="match status" value="1"/>
</dbReference>
<dbReference type="PANTHER" id="PTHR21371:SF1">
    <property type="entry name" value="KETOL-ACID REDUCTOISOMERASE, MITOCHONDRIAL"/>
    <property type="match status" value="1"/>
</dbReference>
<dbReference type="Pfam" id="PF01450">
    <property type="entry name" value="KARI_C"/>
    <property type="match status" value="1"/>
</dbReference>
<dbReference type="Pfam" id="PF07991">
    <property type="entry name" value="KARI_N"/>
    <property type="match status" value="1"/>
</dbReference>
<dbReference type="PIRSF" id="PIRSF000116">
    <property type="entry name" value="IlvC_gammaproteo"/>
    <property type="match status" value="1"/>
</dbReference>
<dbReference type="SUPFAM" id="SSF48179">
    <property type="entry name" value="6-phosphogluconate dehydrogenase C-terminal domain-like"/>
    <property type="match status" value="1"/>
</dbReference>
<dbReference type="SUPFAM" id="SSF51735">
    <property type="entry name" value="NAD(P)-binding Rossmann-fold domains"/>
    <property type="match status" value="1"/>
</dbReference>
<dbReference type="PROSITE" id="PS51851">
    <property type="entry name" value="KARI_C"/>
    <property type="match status" value="1"/>
</dbReference>
<dbReference type="PROSITE" id="PS51850">
    <property type="entry name" value="KARI_N"/>
    <property type="match status" value="1"/>
</dbReference>
<evidence type="ECO:0000255" key="1">
    <source>
        <dbReference type="HAMAP-Rule" id="MF_00435"/>
    </source>
</evidence>
<evidence type="ECO:0000255" key="2">
    <source>
        <dbReference type="PROSITE-ProRule" id="PRU01197"/>
    </source>
</evidence>
<evidence type="ECO:0000255" key="3">
    <source>
        <dbReference type="PROSITE-ProRule" id="PRU01198"/>
    </source>
</evidence>
<evidence type="ECO:0007829" key="4">
    <source>
        <dbReference type="PDB" id="7RDU"/>
    </source>
</evidence>
<comment type="function">
    <text evidence="1">Involved in the biosynthesis of branched-chain amino acids (BCAA). Catalyzes an alkyl-migration followed by a ketol-acid reduction of (S)-2-acetolactate (S2AL) to yield (R)-2,3-dihydroxy-isovalerate. In the isomerase reaction, S2AL is rearranged via a Mg-dependent methyl migration to produce 3-hydroxy-3-methyl-2-ketobutyrate (HMKB). In the reductase reaction, this 2-ketoacid undergoes a metal-dependent reduction by NADPH to yield (R)-2,3-dihydroxy-isovalerate.</text>
</comment>
<comment type="catalytic activity">
    <reaction evidence="1">
        <text>(2R)-2,3-dihydroxy-3-methylbutanoate + NADP(+) = (2S)-2-acetolactate + NADPH + H(+)</text>
        <dbReference type="Rhea" id="RHEA:22068"/>
        <dbReference type="ChEBI" id="CHEBI:15378"/>
        <dbReference type="ChEBI" id="CHEBI:49072"/>
        <dbReference type="ChEBI" id="CHEBI:57783"/>
        <dbReference type="ChEBI" id="CHEBI:58349"/>
        <dbReference type="ChEBI" id="CHEBI:58476"/>
        <dbReference type="EC" id="1.1.1.86"/>
    </reaction>
</comment>
<comment type="catalytic activity">
    <reaction evidence="1">
        <text>(2R,3R)-2,3-dihydroxy-3-methylpentanoate + NADP(+) = (S)-2-ethyl-2-hydroxy-3-oxobutanoate + NADPH + H(+)</text>
        <dbReference type="Rhea" id="RHEA:13493"/>
        <dbReference type="ChEBI" id="CHEBI:15378"/>
        <dbReference type="ChEBI" id="CHEBI:49256"/>
        <dbReference type="ChEBI" id="CHEBI:49258"/>
        <dbReference type="ChEBI" id="CHEBI:57783"/>
        <dbReference type="ChEBI" id="CHEBI:58349"/>
        <dbReference type="EC" id="1.1.1.86"/>
    </reaction>
</comment>
<comment type="cofactor">
    <cofactor evidence="1">
        <name>Mg(2+)</name>
        <dbReference type="ChEBI" id="CHEBI:18420"/>
    </cofactor>
    <text evidence="1">Binds 2 magnesium ions per subunit.</text>
</comment>
<comment type="pathway">
    <text evidence="1">Amino-acid biosynthesis; L-isoleucine biosynthesis; L-isoleucine from 2-oxobutanoate: step 2/4.</text>
</comment>
<comment type="pathway">
    <text evidence="1">Amino-acid biosynthesis; L-valine biosynthesis; L-valine from pyruvate: step 2/4.</text>
</comment>
<comment type="similarity">
    <text evidence="1">Belongs to the ketol-acid reductoisomerase family.</text>
</comment>
<keyword id="KW-0002">3D-structure</keyword>
<keyword id="KW-0028">Amino-acid biosynthesis</keyword>
<keyword id="KW-0100">Branched-chain amino acid biosynthesis</keyword>
<keyword id="KW-0460">Magnesium</keyword>
<keyword id="KW-0479">Metal-binding</keyword>
<keyword id="KW-0521">NADP</keyword>
<keyword id="KW-0560">Oxidoreductase</keyword>
<accession>Q5HVD9</accession>
<organism>
    <name type="scientific">Campylobacter jejuni (strain RM1221)</name>
    <dbReference type="NCBI Taxonomy" id="195099"/>
    <lineage>
        <taxon>Bacteria</taxon>
        <taxon>Pseudomonadati</taxon>
        <taxon>Campylobacterota</taxon>
        <taxon>Epsilonproteobacteria</taxon>
        <taxon>Campylobacterales</taxon>
        <taxon>Campylobacteraceae</taxon>
        <taxon>Campylobacter</taxon>
    </lineage>
</organism>
<gene>
    <name evidence="1" type="primary">ilvC</name>
    <name type="ordered locus">CJE0735</name>
</gene>
<reference key="1">
    <citation type="journal article" date="2005" name="PLoS Biol.">
        <title>Major structural differences and novel potential virulence mechanisms from the genomes of multiple Campylobacter species.</title>
        <authorList>
            <person name="Fouts D.E."/>
            <person name="Mongodin E.F."/>
            <person name="Mandrell R.E."/>
            <person name="Miller W.G."/>
            <person name="Rasko D.A."/>
            <person name="Ravel J."/>
            <person name="Brinkac L.M."/>
            <person name="DeBoy R.T."/>
            <person name="Parker C.T."/>
            <person name="Daugherty S.C."/>
            <person name="Dodson R.J."/>
            <person name="Durkin A.S."/>
            <person name="Madupu R."/>
            <person name="Sullivan S.A."/>
            <person name="Shetty J.U."/>
            <person name="Ayodeji M.A."/>
            <person name="Shvartsbeyn A."/>
            <person name="Schatz M.C."/>
            <person name="Badger J.H."/>
            <person name="Fraser C.M."/>
            <person name="Nelson K.E."/>
        </authorList>
    </citation>
    <scope>NUCLEOTIDE SEQUENCE [LARGE SCALE GENOMIC DNA]</scope>
    <source>
        <strain>RM1221</strain>
    </source>
</reference>
<sequence>MAITVYYDKDCDLNLIKSKKVAIIGFGSQGHAHAMNLRDNGVNVTIGLREGSVSAVKAKNAGFEVMSVSEASKIADVIMILAPDEIQADIFNVEIKPNLSEGKAIAFAHGFNIHYGQIVVPKGVDVIMIAPKAPGHTVRNEFTLGGGTPCLIAIHQDESKNAKNLALSYASAIGGGRTGIIETTFKAETETDLFGEQAVLCGGLSALIQAGFETLVEAGYEPEMAYFECLHEMKLIVDLIYQGGIADMRYSISNTAEYGDYITGPKIITEETKKAMKGVLKDIQNGVFAKDFILERRAGFARMHAERKNMNDSLIEKTGRNLRAMMPWISAKKLVDKDKN</sequence>
<proteinExistence type="evidence at protein level"/>
<feature type="chain" id="PRO_0000226169" description="Ketol-acid reductoisomerase (NADP(+))">
    <location>
        <begin position="1"/>
        <end position="340"/>
    </location>
</feature>
<feature type="domain" description="KARI N-terminal Rossmann" evidence="2">
    <location>
        <begin position="1"/>
        <end position="183"/>
    </location>
</feature>
<feature type="domain" description="KARI C-terminal knotted" evidence="3">
    <location>
        <begin position="184"/>
        <end position="329"/>
    </location>
</feature>
<feature type="active site" evidence="1">
    <location>
        <position position="109"/>
    </location>
</feature>
<feature type="binding site" evidence="1">
    <location>
        <begin position="26"/>
        <end position="29"/>
    </location>
    <ligand>
        <name>NADP(+)</name>
        <dbReference type="ChEBI" id="CHEBI:58349"/>
    </ligand>
</feature>
<feature type="binding site" evidence="1">
    <location>
        <position position="49"/>
    </location>
    <ligand>
        <name>NADP(+)</name>
        <dbReference type="ChEBI" id="CHEBI:58349"/>
    </ligand>
</feature>
<feature type="binding site" evidence="1">
    <location>
        <position position="52"/>
    </location>
    <ligand>
        <name>NADP(+)</name>
        <dbReference type="ChEBI" id="CHEBI:58349"/>
    </ligand>
</feature>
<feature type="binding site" evidence="1">
    <location>
        <position position="54"/>
    </location>
    <ligand>
        <name>NADP(+)</name>
        <dbReference type="ChEBI" id="CHEBI:58349"/>
    </ligand>
</feature>
<feature type="binding site" evidence="1">
    <location>
        <begin position="84"/>
        <end position="87"/>
    </location>
    <ligand>
        <name>NADP(+)</name>
        <dbReference type="ChEBI" id="CHEBI:58349"/>
    </ligand>
</feature>
<feature type="binding site" evidence="1">
    <location>
        <position position="135"/>
    </location>
    <ligand>
        <name>NADP(+)</name>
        <dbReference type="ChEBI" id="CHEBI:58349"/>
    </ligand>
</feature>
<feature type="binding site" evidence="1">
    <location>
        <position position="192"/>
    </location>
    <ligand>
        <name>Mg(2+)</name>
        <dbReference type="ChEBI" id="CHEBI:18420"/>
        <label>1</label>
    </ligand>
</feature>
<feature type="binding site" evidence="1">
    <location>
        <position position="192"/>
    </location>
    <ligand>
        <name>Mg(2+)</name>
        <dbReference type="ChEBI" id="CHEBI:18420"/>
        <label>2</label>
    </ligand>
</feature>
<feature type="binding site" evidence="1">
    <location>
        <position position="196"/>
    </location>
    <ligand>
        <name>Mg(2+)</name>
        <dbReference type="ChEBI" id="CHEBI:18420"/>
        <label>1</label>
    </ligand>
</feature>
<feature type="binding site" evidence="1">
    <location>
        <position position="228"/>
    </location>
    <ligand>
        <name>Mg(2+)</name>
        <dbReference type="ChEBI" id="CHEBI:18420"/>
        <label>2</label>
    </ligand>
</feature>
<feature type="binding site" evidence="1">
    <location>
        <position position="232"/>
    </location>
    <ligand>
        <name>Mg(2+)</name>
        <dbReference type="ChEBI" id="CHEBI:18420"/>
        <label>2</label>
    </ligand>
</feature>
<feature type="binding site" evidence="1">
    <location>
        <position position="253"/>
    </location>
    <ligand>
        <name>substrate</name>
    </ligand>
</feature>
<feature type="helix" evidence="4">
    <location>
        <begin position="8"/>
        <end position="10"/>
    </location>
</feature>
<feature type="helix" evidence="4">
    <location>
        <begin position="13"/>
        <end position="17"/>
    </location>
</feature>
<feature type="strand" evidence="4">
    <location>
        <begin position="19"/>
        <end position="24"/>
    </location>
</feature>
<feature type="helix" evidence="4">
    <location>
        <begin position="28"/>
        <end position="39"/>
    </location>
</feature>
<feature type="strand" evidence="4">
    <location>
        <begin position="43"/>
        <end position="48"/>
    </location>
</feature>
<feature type="helix" evidence="4">
    <location>
        <begin position="53"/>
        <end position="60"/>
    </location>
</feature>
<feature type="strand" evidence="4">
    <location>
        <begin position="64"/>
        <end position="67"/>
    </location>
</feature>
<feature type="helix" evidence="4">
    <location>
        <begin position="68"/>
        <end position="74"/>
    </location>
</feature>
<feature type="strand" evidence="4">
    <location>
        <begin position="76"/>
        <end position="80"/>
    </location>
</feature>
<feature type="helix" evidence="4">
    <location>
        <begin position="84"/>
        <end position="94"/>
    </location>
</feature>
<feature type="helix" evidence="4">
    <location>
        <begin position="96"/>
        <end position="98"/>
    </location>
</feature>
<feature type="strand" evidence="4">
    <location>
        <begin position="104"/>
        <end position="108"/>
    </location>
</feature>
<feature type="helix" evidence="4">
    <location>
        <begin position="111"/>
        <end position="114"/>
    </location>
</feature>
<feature type="strand" evidence="4">
    <location>
        <begin position="124"/>
        <end position="133"/>
    </location>
</feature>
<feature type="helix" evidence="4">
    <location>
        <begin position="135"/>
        <end position="142"/>
    </location>
</feature>
<feature type="turn" evidence="4">
    <location>
        <begin position="143"/>
        <end position="145"/>
    </location>
</feature>
<feature type="strand" evidence="4">
    <location>
        <begin position="150"/>
        <end position="156"/>
    </location>
</feature>
<feature type="strand" evidence="4">
    <location>
        <begin position="158"/>
        <end position="160"/>
    </location>
</feature>
<feature type="helix" evidence="4">
    <location>
        <begin position="162"/>
        <end position="172"/>
    </location>
</feature>
<feature type="helix" evidence="4">
    <location>
        <begin position="175"/>
        <end position="177"/>
    </location>
</feature>
<feature type="strand" evidence="4">
    <location>
        <begin position="180"/>
        <end position="182"/>
    </location>
</feature>
<feature type="helix" evidence="4">
    <location>
        <begin position="185"/>
        <end position="198"/>
    </location>
</feature>
<feature type="turn" evidence="4">
    <location>
        <begin position="199"/>
        <end position="201"/>
    </location>
</feature>
<feature type="helix" evidence="4">
    <location>
        <begin position="202"/>
        <end position="218"/>
    </location>
</feature>
<feature type="helix" evidence="4">
    <location>
        <begin position="222"/>
        <end position="229"/>
    </location>
</feature>
<feature type="turn" evidence="4">
    <location>
        <begin position="230"/>
        <end position="232"/>
    </location>
</feature>
<feature type="helix" evidence="4">
    <location>
        <begin position="233"/>
        <end position="243"/>
    </location>
</feature>
<feature type="helix" evidence="4">
    <location>
        <begin position="245"/>
        <end position="251"/>
    </location>
</feature>
<feature type="helix" evidence="4">
    <location>
        <begin position="254"/>
        <end position="267"/>
    </location>
</feature>
<feature type="helix" evidence="4">
    <location>
        <begin position="270"/>
        <end position="284"/>
    </location>
</feature>
<feature type="helix" evidence="4">
    <location>
        <begin position="287"/>
        <end position="297"/>
    </location>
</feature>
<feature type="helix" evidence="4">
    <location>
        <begin position="301"/>
        <end position="311"/>
    </location>
</feature>
<feature type="helix" evidence="4">
    <location>
        <begin position="314"/>
        <end position="325"/>
    </location>
</feature>
<feature type="turn" evidence="4">
    <location>
        <begin position="327"/>
        <end position="329"/>
    </location>
</feature>